<accession>Q8N1M1</accession>
<accession>B5MDI8</accession>
<accession>F8VVZ2</accession>
<accession>Q53YQ7</accession>
<accession>Q8N356</accession>
<accession>Q8NFT9</accession>
<accession>Q9BR80</accession>
<protein>
    <recommendedName>
        <fullName evidence="8">Bestrophin-3</fullName>
    </recommendedName>
    <alternativeName>
        <fullName>Vitelliform macular dystrophy 2-like protein 3</fullName>
    </alternativeName>
</protein>
<sequence length="668" mass="76107">MTVTYSSKVANATFFGFHRLLLKWRGSIYKLLYREFIVFAVLYTAISLVYRLLLTGVQKRYFEKLSIYCDRYAEQIPVTFVLGFYVTLVVNRWWNQFVNLPWPDRLMFLISSSVHGSDEHGRLLRRTLMRYVNLTSLLIFRSVSTAVYKRFPTMDHVVEAGFMTTDERKLFNHLKSPHLKYWVPFIWFGNLATKARNEGRIRDSVDLQSLMTEMNRYRSWCSLLFGYDWVGIPLVYTQVVTLAVYTFFFACLIGRQFLDPTKGYAGHDLDLYIPIFTLLQFFFYAGWLKVAEQLINPFGEDDDDFETNWCIDRNLQVSLLAVDEMHMSLPKMKKDIYWDDSAARPPYTLAAADYCIPSFLGSTVQMGLSGSDFPDEEWLWDYEKHGHRHSMIRRVKRFLSAHEHPSSPRRRSYRRQTSDSSMFLPRDDLSPARDLLDVPSRNPPRASPTWKKSCFPEGSPTLHFSMGELSTIRETSQTSTLQSLTPQSSVRTSPIKMPLVPEVLITAAEAPVPTSGGYHHDSATSILSSEFTGVQPSKTEQQQGPMGSILSPSEKETPPGGPSPQTVSASAEENIFNCEEDPGDTFLKRWSLPGFLGSSHTSLGNLSPDPMSSQPALLIDTETSSEISGINIVAGSRVSSDMLYLMENLDTKETDIIELNKETEESPK</sequence>
<name>BEST3_HUMAN</name>
<keyword id="KW-0025">Alternative splicing</keyword>
<keyword id="KW-0106">Calcium</keyword>
<keyword id="KW-1003">Cell membrane</keyword>
<keyword id="KW-0868">Chloride</keyword>
<keyword id="KW-0869">Chloride channel</keyword>
<keyword id="KW-0407">Ion channel</keyword>
<keyword id="KW-0406">Ion transport</keyword>
<keyword id="KW-0472">Membrane</keyword>
<keyword id="KW-0479">Metal-binding</keyword>
<keyword id="KW-1267">Proteomics identification</keyword>
<keyword id="KW-1185">Reference proteome</keyword>
<keyword id="KW-0812">Transmembrane</keyword>
<keyword id="KW-1133">Transmembrane helix</keyword>
<keyword id="KW-0813">Transport</keyword>
<reference key="1">
    <citation type="journal article" date="2002" name="Eur. J. Hum. Genet.">
        <title>Three novel human VMD2-like genes are members of the evolutionary highly conserved RFP-TM family.</title>
        <authorList>
            <person name="Stoehr H."/>
            <person name="Marquardt A."/>
            <person name="Nanda I."/>
            <person name="Schmid M."/>
            <person name="Weber B.H.F."/>
        </authorList>
    </citation>
    <scope>NUCLEOTIDE SEQUENCE [MRNA] (ISOFORM 1)</scope>
    <scope>TISSUE SPECIFICITY</scope>
</reference>
<reference key="2">
    <citation type="journal article" date="2003" name="J. Biol. Chem.">
        <title>Structure-function analysis of the bestrophin family of anion channels.</title>
        <authorList>
            <person name="Tsunenari T."/>
            <person name="Sun H."/>
            <person name="Williams J."/>
            <person name="Cahill H."/>
            <person name="Smallwood P."/>
            <person name="Yau K.-W."/>
            <person name="Nathans J."/>
        </authorList>
    </citation>
    <scope>NUCLEOTIDE SEQUENCE [MRNA] (ISOFORM 1)</scope>
    <scope>FUNCTION</scope>
    <scope>CATALYTIC ACTIVITY</scope>
</reference>
<reference key="3">
    <citation type="journal article" date="2004" name="Nat. Genet.">
        <title>Complete sequencing and characterization of 21,243 full-length human cDNAs.</title>
        <authorList>
            <person name="Ota T."/>
            <person name="Suzuki Y."/>
            <person name="Nishikawa T."/>
            <person name="Otsuki T."/>
            <person name="Sugiyama T."/>
            <person name="Irie R."/>
            <person name="Wakamatsu A."/>
            <person name="Hayashi K."/>
            <person name="Sato H."/>
            <person name="Nagai K."/>
            <person name="Kimura K."/>
            <person name="Makita H."/>
            <person name="Sekine M."/>
            <person name="Obayashi M."/>
            <person name="Nishi T."/>
            <person name="Shibahara T."/>
            <person name="Tanaka T."/>
            <person name="Ishii S."/>
            <person name="Yamamoto J."/>
            <person name="Saito K."/>
            <person name="Kawai Y."/>
            <person name="Isono Y."/>
            <person name="Nakamura Y."/>
            <person name="Nagahari K."/>
            <person name="Murakami K."/>
            <person name="Yasuda T."/>
            <person name="Iwayanagi T."/>
            <person name="Wagatsuma M."/>
            <person name="Shiratori A."/>
            <person name="Sudo H."/>
            <person name="Hosoiri T."/>
            <person name="Kaku Y."/>
            <person name="Kodaira H."/>
            <person name="Kondo H."/>
            <person name="Sugawara M."/>
            <person name="Takahashi M."/>
            <person name="Kanda K."/>
            <person name="Yokoi T."/>
            <person name="Furuya T."/>
            <person name="Kikkawa E."/>
            <person name="Omura Y."/>
            <person name="Abe K."/>
            <person name="Kamihara K."/>
            <person name="Katsuta N."/>
            <person name="Sato K."/>
            <person name="Tanikawa M."/>
            <person name="Yamazaki M."/>
            <person name="Ninomiya K."/>
            <person name="Ishibashi T."/>
            <person name="Yamashita H."/>
            <person name="Murakawa K."/>
            <person name="Fujimori K."/>
            <person name="Tanai H."/>
            <person name="Kimata M."/>
            <person name="Watanabe M."/>
            <person name="Hiraoka S."/>
            <person name="Chiba Y."/>
            <person name="Ishida S."/>
            <person name="Ono Y."/>
            <person name="Takiguchi S."/>
            <person name="Watanabe S."/>
            <person name="Yosida M."/>
            <person name="Hotuta T."/>
            <person name="Kusano J."/>
            <person name="Kanehori K."/>
            <person name="Takahashi-Fujii A."/>
            <person name="Hara H."/>
            <person name="Tanase T.-O."/>
            <person name="Nomura Y."/>
            <person name="Togiya S."/>
            <person name="Komai F."/>
            <person name="Hara R."/>
            <person name="Takeuchi K."/>
            <person name="Arita M."/>
            <person name="Imose N."/>
            <person name="Musashino K."/>
            <person name="Yuuki H."/>
            <person name="Oshima A."/>
            <person name="Sasaki N."/>
            <person name="Aotsuka S."/>
            <person name="Yoshikawa Y."/>
            <person name="Matsunawa H."/>
            <person name="Ichihara T."/>
            <person name="Shiohata N."/>
            <person name="Sano S."/>
            <person name="Moriya S."/>
            <person name="Momiyama H."/>
            <person name="Satoh N."/>
            <person name="Takami S."/>
            <person name="Terashima Y."/>
            <person name="Suzuki O."/>
            <person name="Nakagawa S."/>
            <person name="Senoh A."/>
            <person name="Mizoguchi H."/>
            <person name="Goto Y."/>
            <person name="Shimizu F."/>
            <person name="Wakebe H."/>
            <person name="Hishigaki H."/>
            <person name="Watanabe T."/>
            <person name="Sugiyama A."/>
            <person name="Takemoto M."/>
            <person name="Kawakami B."/>
            <person name="Yamazaki M."/>
            <person name="Watanabe K."/>
            <person name="Kumagai A."/>
            <person name="Itakura S."/>
            <person name="Fukuzumi Y."/>
            <person name="Fujimori Y."/>
            <person name="Komiyama M."/>
            <person name="Tashiro H."/>
            <person name="Tanigami A."/>
            <person name="Fujiwara T."/>
            <person name="Ono T."/>
            <person name="Yamada K."/>
            <person name="Fujii Y."/>
            <person name="Ozaki K."/>
            <person name="Hirao M."/>
            <person name="Ohmori Y."/>
            <person name="Kawabata A."/>
            <person name="Hikiji T."/>
            <person name="Kobatake N."/>
            <person name="Inagaki H."/>
            <person name="Ikema Y."/>
            <person name="Okamoto S."/>
            <person name="Okitani R."/>
            <person name="Kawakami T."/>
            <person name="Noguchi S."/>
            <person name="Itoh T."/>
            <person name="Shigeta K."/>
            <person name="Senba T."/>
            <person name="Matsumura K."/>
            <person name="Nakajima Y."/>
            <person name="Mizuno T."/>
            <person name="Morinaga M."/>
            <person name="Sasaki M."/>
            <person name="Togashi T."/>
            <person name="Oyama M."/>
            <person name="Hata H."/>
            <person name="Watanabe M."/>
            <person name="Komatsu T."/>
            <person name="Mizushima-Sugano J."/>
            <person name="Satoh T."/>
            <person name="Shirai Y."/>
            <person name="Takahashi Y."/>
            <person name="Nakagawa K."/>
            <person name="Okumura K."/>
            <person name="Nagase T."/>
            <person name="Nomura N."/>
            <person name="Kikuchi H."/>
            <person name="Masuho Y."/>
            <person name="Yamashita R."/>
            <person name="Nakai K."/>
            <person name="Yada T."/>
            <person name="Nakamura Y."/>
            <person name="Ohara O."/>
            <person name="Isogai T."/>
            <person name="Sugano S."/>
        </authorList>
    </citation>
    <scope>NUCLEOTIDE SEQUENCE [LARGE SCALE MRNA] (ISOFORM 2)</scope>
    <source>
        <tissue>Tongue</tissue>
    </source>
</reference>
<reference key="4">
    <citation type="journal article" date="2006" name="Nature">
        <title>The finished DNA sequence of human chromosome 12.</title>
        <authorList>
            <person name="Scherer S.E."/>
            <person name="Muzny D.M."/>
            <person name="Buhay C.J."/>
            <person name="Chen R."/>
            <person name="Cree A."/>
            <person name="Ding Y."/>
            <person name="Dugan-Rocha S."/>
            <person name="Gill R."/>
            <person name="Gunaratne P."/>
            <person name="Harris R.A."/>
            <person name="Hawes A.C."/>
            <person name="Hernandez J."/>
            <person name="Hodgson A.V."/>
            <person name="Hume J."/>
            <person name="Jackson A."/>
            <person name="Khan Z.M."/>
            <person name="Kovar-Smith C."/>
            <person name="Lewis L.R."/>
            <person name="Lozado R.J."/>
            <person name="Metzker M.L."/>
            <person name="Milosavljevic A."/>
            <person name="Miner G.R."/>
            <person name="Montgomery K.T."/>
            <person name="Morgan M.B."/>
            <person name="Nazareth L.V."/>
            <person name="Scott G."/>
            <person name="Sodergren E."/>
            <person name="Song X.-Z."/>
            <person name="Steffen D."/>
            <person name="Lovering R.C."/>
            <person name="Wheeler D.A."/>
            <person name="Worley K.C."/>
            <person name="Yuan Y."/>
            <person name="Zhang Z."/>
            <person name="Adams C.Q."/>
            <person name="Ansari-Lari M.A."/>
            <person name="Ayele M."/>
            <person name="Brown M.J."/>
            <person name="Chen G."/>
            <person name="Chen Z."/>
            <person name="Clerc-Blankenburg K.P."/>
            <person name="Davis C."/>
            <person name="Delgado O."/>
            <person name="Dinh H.H."/>
            <person name="Draper H."/>
            <person name="Gonzalez-Garay M.L."/>
            <person name="Havlak P."/>
            <person name="Jackson L.R."/>
            <person name="Jacob L.S."/>
            <person name="Kelly S.H."/>
            <person name="Li L."/>
            <person name="Li Z."/>
            <person name="Liu J."/>
            <person name="Liu W."/>
            <person name="Lu J."/>
            <person name="Maheshwari M."/>
            <person name="Nguyen B.-V."/>
            <person name="Okwuonu G.O."/>
            <person name="Pasternak S."/>
            <person name="Perez L.M."/>
            <person name="Plopper F.J.H."/>
            <person name="Santibanez J."/>
            <person name="Shen H."/>
            <person name="Tabor P.E."/>
            <person name="Verduzco D."/>
            <person name="Waldron L."/>
            <person name="Wang Q."/>
            <person name="Williams G.A."/>
            <person name="Zhang J."/>
            <person name="Zhou J."/>
            <person name="Allen C.C."/>
            <person name="Amin A.G."/>
            <person name="Anyalebechi V."/>
            <person name="Bailey M."/>
            <person name="Barbaria J.A."/>
            <person name="Bimage K.E."/>
            <person name="Bryant N.P."/>
            <person name="Burch P.E."/>
            <person name="Burkett C.E."/>
            <person name="Burrell K.L."/>
            <person name="Calderon E."/>
            <person name="Cardenas V."/>
            <person name="Carter K."/>
            <person name="Casias K."/>
            <person name="Cavazos I."/>
            <person name="Cavazos S.R."/>
            <person name="Ceasar H."/>
            <person name="Chacko J."/>
            <person name="Chan S.N."/>
            <person name="Chavez D."/>
            <person name="Christopoulos C."/>
            <person name="Chu J."/>
            <person name="Cockrell R."/>
            <person name="Cox C.D."/>
            <person name="Dang M."/>
            <person name="Dathorne S.R."/>
            <person name="David R."/>
            <person name="Davis C.M."/>
            <person name="Davy-Carroll L."/>
            <person name="Deshazo D.R."/>
            <person name="Donlin J.E."/>
            <person name="D'Souza L."/>
            <person name="Eaves K.A."/>
            <person name="Egan A."/>
            <person name="Emery-Cohen A.J."/>
            <person name="Escotto M."/>
            <person name="Flagg N."/>
            <person name="Forbes L.D."/>
            <person name="Gabisi A.M."/>
            <person name="Garza M."/>
            <person name="Hamilton C."/>
            <person name="Henderson N."/>
            <person name="Hernandez O."/>
            <person name="Hines S."/>
            <person name="Hogues M.E."/>
            <person name="Huang M."/>
            <person name="Idlebird D.G."/>
            <person name="Johnson R."/>
            <person name="Jolivet A."/>
            <person name="Jones S."/>
            <person name="Kagan R."/>
            <person name="King L.M."/>
            <person name="Leal B."/>
            <person name="Lebow H."/>
            <person name="Lee S."/>
            <person name="LeVan J.M."/>
            <person name="Lewis L.C."/>
            <person name="London P."/>
            <person name="Lorensuhewa L.M."/>
            <person name="Loulseged H."/>
            <person name="Lovett D.A."/>
            <person name="Lucier A."/>
            <person name="Lucier R.L."/>
            <person name="Ma J."/>
            <person name="Madu R.C."/>
            <person name="Mapua P."/>
            <person name="Martindale A.D."/>
            <person name="Martinez E."/>
            <person name="Massey E."/>
            <person name="Mawhiney S."/>
            <person name="Meador M.G."/>
            <person name="Mendez S."/>
            <person name="Mercado C."/>
            <person name="Mercado I.C."/>
            <person name="Merritt C.E."/>
            <person name="Miner Z.L."/>
            <person name="Minja E."/>
            <person name="Mitchell T."/>
            <person name="Mohabbat F."/>
            <person name="Mohabbat K."/>
            <person name="Montgomery B."/>
            <person name="Moore N."/>
            <person name="Morris S."/>
            <person name="Munidasa M."/>
            <person name="Ngo R.N."/>
            <person name="Nguyen N.B."/>
            <person name="Nickerson E."/>
            <person name="Nwaokelemeh O.O."/>
            <person name="Nwokenkwo S."/>
            <person name="Obregon M."/>
            <person name="Oguh M."/>
            <person name="Oragunye N."/>
            <person name="Oviedo R.J."/>
            <person name="Parish B.J."/>
            <person name="Parker D.N."/>
            <person name="Parrish J."/>
            <person name="Parks K.L."/>
            <person name="Paul H.A."/>
            <person name="Payton B.A."/>
            <person name="Perez A."/>
            <person name="Perrin W."/>
            <person name="Pickens A."/>
            <person name="Primus E.L."/>
            <person name="Pu L.-L."/>
            <person name="Puazo M."/>
            <person name="Quiles M.M."/>
            <person name="Quiroz J.B."/>
            <person name="Rabata D."/>
            <person name="Reeves K."/>
            <person name="Ruiz S.J."/>
            <person name="Shao H."/>
            <person name="Sisson I."/>
            <person name="Sonaike T."/>
            <person name="Sorelle R.P."/>
            <person name="Sutton A.E."/>
            <person name="Svatek A.F."/>
            <person name="Svetz L.A."/>
            <person name="Tamerisa K.S."/>
            <person name="Taylor T.R."/>
            <person name="Teague B."/>
            <person name="Thomas N."/>
            <person name="Thorn R.D."/>
            <person name="Trejos Z.Y."/>
            <person name="Trevino B.K."/>
            <person name="Ukegbu O.N."/>
            <person name="Urban J.B."/>
            <person name="Vasquez L.I."/>
            <person name="Vera V.A."/>
            <person name="Villasana D.M."/>
            <person name="Wang L."/>
            <person name="Ward-Moore S."/>
            <person name="Warren J.T."/>
            <person name="Wei X."/>
            <person name="White F."/>
            <person name="Williamson A.L."/>
            <person name="Wleczyk R."/>
            <person name="Wooden H.S."/>
            <person name="Wooden S.H."/>
            <person name="Yen J."/>
            <person name="Yoon L."/>
            <person name="Yoon V."/>
            <person name="Zorrilla S.E."/>
            <person name="Nelson D."/>
            <person name="Kucherlapati R."/>
            <person name="Weinstock G."/>
            <person name="Gibbs R.A."/>
        </authorList>
    </citation>
    <scope>NUCLEOTIDE SEQUENCE [LARGE SCALE GENOMIC DNA]</scope>
</reference>
<reference key="5">
    <citation type="journal article" date="2004" name="Genome Res.">
        <title>The status, quality, and expansion of the NIH full-length cDNA project: the Mammalian Gene Collection (MGC).</title>
        <authorList>
            <consortium name="The MGC Project Team"/>
        </authorList>
    </citation>
    <scope>NUCLEOTIDE SEQUENCE [LARGE SCALE MRNA] (ISOFORMS 4 AND 6)</scope>
    <source>
        <tissue>Lymph</tissue>
    </source>
</reference>
<organism>
    <name type="scientific">Homo sapiens</name>
    <name type="common">Human</name>
    <dbReference type="NCBI Taxonomy" id="9606"/>
    <lineage>
        <taxon>Eukaryota</taxon>
        <taxon>Metazoa</taxon>
        <taxon>Chordata</taxon>
        <taxon>Craniata</taxon>
        <taxon>Vertebrata</taxon>
        <taxon>Euteleostomi</taxon>
        <taxon>Mammalia</taxon>
        <taxon>Eutheria</taxon>
        <taxon>Euarchontoglires</taxon>
        <taxon>Primates</taxon>
        <taxon>Haplorrhini</taxon>
        <taxon>Catarrhini</taxon>
        <taxon>Hominidae</taxon>
        <taxon>Homo</taxon>
    </lineage>
</organism>
<gene>
    <name evidence="9" type="primary">BEST3</name>
    <name evidence="5" type="synonym">VMD2L3</name>
</gene>
<proteinExistence type="evidence at protein level"/>
<comment type="function">
    <text evidence="4">Ligand-gated anion channel that allows the movement of chloride monoatomic anions across cell membranes when activated by calcium (Ca2+).</text>
</comment>
<comment type="catalytic activity">
    <reaction evidence="4">
        <text>chloride(in) = chloride(out)</text>
        <dbReference type="Rhea" id="RHEA:29823"/>
        <dbReference type="ChEBI" id="CHEBI:17996"/>
    </reaction>
</comment>
<comment type="interaction">
    <interactant intactId="EBI-20140863">
        <id>Q8N1M1-5</id>
    </interactant>
    <interactant intactId="EBI-19954058">
        <id>O15499</id>
        <label>GSC2</label>
    </interactant>
    <organismsDiffer>false</organismsDiffer>
    <experiments>3</experiments>
</comment>
<comment type="subcellular location">
    <subcellularLocation>
        <location>Cell membrane</location>
        <topology>Multi-pass membrane protein</topology>
    </subcellularLocation>
</comment>
<comment type="alternative products">
    <event type="alternative splicing"/>
    <isoform>
        <id>Q8N1M1-2</id>
        <name>2</name>
        <sequence type="displayed"/>
    </isoform>
    <isoform>
        <id>Q8N1M1-1</id>
        <name>1</name>
        <sequence type="described" ref="VSP_008977 VSP_008978"/>
    </isoform>
    <isoform>
        <id>Q8N1M1-4</id>
        <name>4</name>
        <sequence type="described" ref="VSP_008981 VSP_008982 VSP_008983"/>
    </isoform>
    <isoform>
        <id>Q8N1M1-5</id>
        <name>5</name>
        <sequence type="described" ref="VSP_046979 VSP_046980"/>
    </isoform>
    <isoform>
        <id>Q8N1M1-6</id>
        <name>6</name>
        <sequence type="described" ref="VSP_008981"/>
    </isoform>
</comment>
<comment type="tissue specificity">
    <text evidence="3">Present in skeletal muscle and weakly in brain, spinal cord, bone marrow and retina.</text>
</comment>
<comment type="similarity">
    <text evidence="8">Belongs to the anion channel-forming bestrophin (TC 1.A.46) family. Calcium-sensitive chloride channel subfamily.</text>
</comment>
<evidence type="ECO:0000250" key="1">
    <source>
        <dbReference type="UniProtKB" id="O76090"/>
    </source>
</evidence>
<evidence type="ECO:0000256" key="2">
    <source>
        <dbReference type="SAM" id="MobiDB-lite"/>
    </source>
</evidence>
<evidence type="ECO:0000269" key="3">
    <source>
    </source>
</evidence>
<evidence type="ECO:0000269" key="4">
    <source>
    </source>
</evidence>
<evidence type="ECO:0000303" key="5">
    <source>
    </source>
</evidence>
<evidence type="ECO:0000303" key="6">
    <source>
    </source>
</evidence>
<evidence type="ECO:0000303" key="7">
    <source>
    </source>
</evidence>
<evidence type="ECO:0000305" key="8"/>
<evidence type="ECO:0000312" key="9">
    <source>
        <dbReference type="HGNC" id="HGNC:17105"/>
    </source>
</evidence>
<dbReference type="EMBL" id="AF440758">
    <property type="protein sequence ID" value="AAM76997.1"/>
    <property type="molecule type" value="mRNA"/>
</dbReference>
<dbReference type="EMBL" id="AY515706">
    <property type="protein sequence ID" value="AAR99656.1"/>
    <property type="molecule type" value="mRNA"/>
</dbReference>
<dbReference type="EMBL" id="AK096459">
    <property type="protein sequence ID" value="BAC04797.1"/>
    <property type="molecule type" value="mRNA"/>
</dbReference>
<dbReference type="EMBL" id="AC016153">
    <property type="status" value="NOT_ANNOTATED_CDS"/>
    <property type="molecule type" value="Genomic_DNA"/>
</dbReference>
<dbReference type="EMBL" id="AC018921">
    <property type="status" value="NOT_ANNOTATED_CDS"/>
    <property type="molecule type" value="Genomic_DNA"/>
</dbReference>
<dbReference type="EMBL" id="AC025263">
    <property type="status" value="NOT_ANNOTATED_CDS"/>
    <property type="molecule type" value="Genomic_DNA"/>
</dbReference>
<dbReference type="EMBL" id="BC151138">
    <property type="status" value="NOT_ANNOTATED_CDS"/>
    <property type="molecule type" value="mRNA"/>
</dbReference>
<dbReference type="EMBL" id="BC006440">
    <property type="protein sequence ID" value="AAH06440.1"/>
    <property type="molecule type" value="mRNA"/>
</dbReference>
<dbReference type="CCDS" id="CCDS41810.1">
    <molecule id="Q8N1M1-5"/>
</dbReference>
<dbReference type="CCDS" id="CCDS61192.1">
    <molecule id="Q8N1M1-6"/>
</dbReference>
<dbReference type="CCDS" id="CCDS61193.1">
    <molecule id="Q8N1M1-1"/>
</dbReference>
<dbReference type="CCDS" id="CCDS73496.1">
    <molecule id="Q8N1M1-4"/>
</dbReference>
<dbReference type="CCDS" id="CCDS8992.2">
    <molecule id="Q8N1M1-2"/>
</dbReference>
<dbReference type="RefSeq" id="NP_001269542.1">
    <molecule id="Q8N1M1-6"/>
    <property type="nucleotide sequence ID" value="NM_001282613.2"/>
</dbReference>
<dbReference type="RefSeq" id="NP_001269543.1">
    <molecule id="Q8N1M1-1"/>
    <property type="nucleotide sequence ID" value="NM_001282614.2"/>
</dbReference>
<dbReference type="RefSeq" id="NP_001269544.1">
    <molecule id="Q8N1M1-4"/>
    <property type="nucleotide sequence ID" value="NM_001282615.2"/>
</dbReference>
<dbReference type="RefSeq" id="NP_001269545.1">
    <molecule id="Q8N1M1-4"/>
    <property type="nucleotide sequence ID" value="NM_001282616.2"/>
</dbReference>
<dbReference type="RefSeq" id="NP_116124.2">
    <molecule id="Q8N1M1-2"/>
    <property type="nucleotide sequence ID" value="NM_032735.3"/>
</dbReference>
<dbReference type="RefSeq" id="NP_689652.2">
    <molecule id="Q8N1M1-5"/>
    <property type="nucleotide sequence ID" value="NM_152439.4"/>
</dbReference>
<dbReference type="RefSeq" id="XP_011536263.1">
    <molecule id="Q8N1M1-6"/>
    <property type="nucleotide sequence ID" value="XM_011537961.2"/>
</dbReference>
<dbReference type="RefSeq" id="XP_047284332.1">
    <molecule id="Q8N1M1-6"/>
    <property type="nucleotide sequence ID" value="XM_047428376.1"/>
</dbReference>
<dbReference type="RefSeq" id="XP_047284339.1">
    <molecule id="Q8N1M1-4"/>
    <property type="nucleotide sequence ID" value="XM_047428383.1"/>
</dbReference>
<dbReference type="RefSeq" id="XP_054227159.1">
    <molecule id="Q8N1M1-2"/>
    <property type="nucleotide sequence ID" value="XM_054371184.1"/>
</dbReference>
<dbReference type="RefSeq" id="XP_054227160.1">
    <molecule id="Q8N1M1-6"/>
    <property type="nucleotide sequence ID" value="XM_054371185.1"/>
</dbReference>
<dbReference type="SMR" id="Q8N1M1"/>
<dbReference type="BioGRID" id="126854">
    <property type="interactions" value="1"/>
</dbReference>
<dbReference type="FunCoup" id="Q8N1M1">
    <property type="interactions" value="164"/>
</dbReference>
<dbReference type="IntAct" id="Q8N1M1">
    <property type="interactions" value="2"/>
</dbReference>
<dbReference type="STRING" id="9606.ENSP00000332413"/>
<dbReference type="TCDB" id="1.A.46.1.8">
    <property type="family name" value="the anion channel-forming bestrophin (bestrophin) family"/>
</dbReference>
<dbReference type="GlyGen" id="Q8N1M1">
    <property type="glycosylation" value="1 site"/>
</dbReference>
<dbReference type="iPTMnet" id="Q8N1M1"/>
<dbReference type="PhosphoSitePlus" id="Q8N1M1"/>
<dbReference type="BioMuta" id="BEST3"/>
<dbReference type="DMDM" id="38503351"/>
<dbReference type="jPOST" id="Q8N1M1"/>
<dbReference type="MassIVE" id="Q8N1M1"/>
<dbReference type="PaxDb" id="9606-ENSP00000332413"/>
<dbReference type="PeptideAtlas" id="Q8N1M1"/>
<dbReference type="ProteomicsDB" id="28912"/>
<dbReference type="ProteomicsDB" id="6178"/>
<dbReference type="ProteomicsDB" id="71617">
    <molecule id="Q8N1M1-2"/>
</dbReference>
<dbReference type="ProteomicsDB" id="71618">
    <molecule id="Q8N1M1-1"/>
</dbReference>
<dbReference type="ProteomicsDB" id="71619">
    <molecule id="Q8N1M1-4"/>
</dbReference>
<dbReference type="Antibodypedia" id="29432">
    <property type="antibodies" value="316 antibodies from 27 providers"/>
</dbReference>
<dbReference type="DNASU" id="144453"/>
<dbReference type="Ensembl" id="ENST00000266661.8">
    <molecule id="Q8N1M1-4"/>
    <property type="protein sequence ID" value="ENSP00000266661.4"/>
    <property type="gene ID" value="ENSG00000127325.19"/>
</dbReference>
<dbReference type="Ensembl" id="ENST00000330891.10">
    <molecule id="Q8N1M1-2"/>
    <property type="protein sequence ID" value="ENSP00000332413.5"/>
    <property type="gene ID" value="ENSG00000127325.19"/>
</dbReference>
<dbReference type="Ensembl" id="ENST00000331471.8">
    <molecule id="Q8N1M1-1"/>
    <property type="protein sequence ID" value="ENSP00000329064.4"/>
    <property type="gene ID" value="ENSG00000127325.19"/>
</dbReference>
<dbReference type="Ensembl" id="ENST00000488961.5">
    <molecule id="Q8N1M1-5"/>
    <property type="protein sequence ID" value="ENSP00000433213.1"/>
    <property type="gene ID" value="ENSG00000127325.19"/>
</dbReference>
<dbReference type="Ensembl" id="ENST00000551160.5">
    <molecule id="Q8N1M1-4"/>
    <property type="protein sequence ID" value="ENSP00000449377.1"/>
    <property type="gene ID" value="ENSG00000127325.19"/>
</dbReference>
<dbReference type="Ensembl" id="ENST00000553096.5">
    <molecule id="Q8N1M1-6"/>
    <property type="protein sequence ID" value="ENSP00000449548.1"/>
    <property type="gene ID" value="ENSG00000127325.19"/>
</dbReference>
<dbReference type="GeneID" id="144453"/>
<dbReference type="KEGG" id="hsa:144453"/>
<dbReference type="MANE-Select" id="ENST00000330891.10">
    <property type="protein sequence ID" value="ENSP00000332413.5"/>
    <property type="RefSeq nucleotide sequence ID" value="NM_032735.3"/>
    <property type="RefSeq protein sequence ID" value="NP_116124.2"/>
</dbReference>
<dbReference type="UCSC" id="uc001svd.4">
    <molecule id="Q8N1M1-2"/>
    <property type="organism name" value="human"/>
</dbReference>
<dbReference type="AGR" id="HGNC:17105"/>
<dbReference type="CTD" id="144453"/>
<dbReference type="DisGeNET" id="144453"/>
<dbReference type="GeneCards" id="BEST3"/>
<dbReference type="HGNC" id="HGNC:17105">
    <property type="gene designation" value="BEST3"/>
</dbReference>
<dbReference type="HPA" id="ENSG00000127325">
    <property type="expression patterns" value="Group enriched (skeletal muscle, tongue)"/>
</dbReference>
<dbReference type="MIM" id="607337">
    <property type="type" value="gene"/>
</dbReference>
<dbReference type="neXtProt" id="NX_Q8N1M1"/>
<dbReference type="OpenTargets" id="ENSG00000127325"/>
<dbReference type="PharmGKB" id="PA162377503"/>
<dbReference type="VEuPathDB" id="HostDB:ENSG00000127325"/>
<dbReference type="eggNOG" id="KOG3547">
    <property type="taxonomic scope" value="Eukaryota"/>
</dbReference>
<dbReference type="GeneTree" id="ENSGT00940000157777"/>
<dbReference type="HOGENOM" id="CLU_018069_0_1_1"/>
<dbReference type="InParanoid" id="Q8N1M1"/>
<dbReference type="OMA" id="DWLWNYE"/>
<dbReference type="OrthoDB" id="201595at2759"/>
<dbReference type="PAN-GO" id="Q8N1M1">
    <property type="GO annotations" value="0 GO annotations based on evolutionary models"/>
</dbReference>
<dbReference type="PhylomeDB" id="Q8N1M1"/>
<dbReference type="TreeFam" id="TF315803"/>
<dbReference type="PathwayCommons" id="Q8N1M1"/>
<dbReference type="Reactome" id="R-HSA-2672351">
    <property type="pathway name" value="Stimuli-sensing channels"/>
</dbReference>
<dbReference type="SignaLink" id="Q8N1M1"/>
<dbReference type="BioGRID-ORCS" id="144453">
    <property type="hits" value="10 hits in 1129 CRISPR screens"/>
</dbReference>
<dbReference type="ChiTaRS" id="BEST3">
    <property type="organism name" value="human"/>
</dbReference>
<dbReference type="GenomeRNAi" id="144453"/>
<dbReference type="Pharos" id="Q8N1M1">
    <property type="development level" value="Tbio"/>
</dbReference>
<dbReference type="PRO" id="PR:Q8N1M1"/>
<dbReference type="Proteomes" id="UP000005640">
    <property type="component" value="Chromosome 12"/>
</dbReference>
<dbReference type="RNAct" id="Q8N1M1">
    <property type="molecule type" value="protein"/>
</dbReference>
<dbReference type="Bgee" id="ENSG00000127325">
    <property type="expression patterns" value="Expressed in tibialis anterior and 119 other cell types or tissues"/>
</dbReference>
<dbReference type="ExpressionAtlas" id="Q8N1M1">
    <property type="expression patterns" value="baseline and differential"/>
</dbReference>
<dbReference type="GO" id="GO:0034707">
    <property type="term" value="C:chloride channel complex"/>
    <property type="evidence" value="ECO:0007669"/>
    <property type="project" value="UniProtKB-KW"/>
</dbReference>
<dbReference type="GO" id="GO:0005886">
    <property type="term" value="C:plasma membrane"/>
    <property type="evidence" value="ECO:0000250"/>
    <property type="project" value="UniProtKB"/>
</dbReference>
<dbReference type="GO" id="GO:0005229">
    <property type="term" value="F:intracellularly calcium-gated chloride channel activity"/>
    <property type="evidence" value="ECO:0000314"/>
    <property type="project" value="UniProtKB"/>
</dbReference>
<dbReference type="GO" id="GO:0099095">
    <property type="term" value="F:ligand-gated monoatomic anion channel activity"/>
    <property type="evidence" value="ECO:0000250"/>
    <property type="project" value="UniProtKB"/>
</dbReference>
<dbReference type="GO" id="GO:0046872">
    <property type="term" value="F:metal ion binding"/>
    <property type="evidence" value="ECO:0007669"/>
    <property type="project" value="UniProtKB-KW"/>
</dbReference>
<dbReference type="GO" id="GO:0043271">
    <property type="term" value="P:negative regulation of monoatomic ion transport"/>
    <property type="evidence" value="ECO:0007669"/>
    <property type="project" value="Ensembl"/>
</dbReference>
<dbReference type="InterPro" id="IPR000615">
    <property type="entry name" value="Bestrophin"/>
</dbReference>
<dbReference type="InterPro" id="IPR021134">
    <property type="entry name" value="Bestrophin-like"/>
</dbReference>
<dbReference type="PANTHER" id="PTHR10736">
    <property type="entry name" value="BESTROPHIN"/>
    <property type="match status" value="1"/>
</dbReference>
<dbReference type="PANTHER" id="PTHR10736:SF2">
    <property type="entry name" value="BESTROPHIN-3"/>
    <property type="match status" value="1"/>
</dbReference>
<dbReference type="Pfam" id="PF01062">
    <property type="entry name" value="Bestrophin"/>
    <property type="match status" value="1"/>
</dbReference>
<feature type="chain" id="PRO_0000143121" description="Bestrophin-3">
    <location>
        <begin position="1"/>
        <end position="668"/>
    </location>
</feature>
<feature type="topological domain" description="Cytoplasmic" evidence="1">
    <location>
        <begin position="1"/>
        <end position="31"/>
    </location>
</feature>
<feature type="transmembrane region" description="Helical" evidence="1">
    <location>
        <begin position="32"/>
        <end position="51"/>
    </location>
</feature>
<feature type="topological domain" description="Extracellular" evidence="1">
    <location>
        <begin position="52"/>
        <end position="60"/>
    </location>
</feature>
<feature type="transmembrane region" description="Helical" evidence="1">
    <location>
        <begin position="61"/>
        <end position="82"/>
    </location>
</feature>
<feature type="topological domain" description="Cytoplasmic" evidence="1">
    <location>
        <begin position="83"/>
        <end position="237"/>
    </location>
</feature>
<feature type="transmembrane region" description="Helical" evidence="1">
    <location>
        <begin position="238"/>
        <end position="255"/>
    </location>
</feature>
<feature type="topological domain" description="Extracellular" evidence="1">
    <location>
        <begin position="256"/>
        <end position="274"/>
    </location>
</feature>
<feature type="transmembrane region" description="Helical" evidence="1">
    <location>
        <begin position="275"/>
        <end position="288"/>
    </location>
</feature>
<feature type="topological domain" description="Cytoplasmic" evidence="1">
    <location>
        <begin position="289"/>
        <end position="668"/>
    </location>
</feature>
<feature type="region of interest" description="Disordered" evidence="2">
    <location>
        <begin position="400"/>
        <end position="454"/>
    </location>
</feature>
<feature type="region of interest" description="Disordered" evidence="2">
    <location>
        <begin position="473"/>
        <end position="493"/>
    </location>
</feature>
<feature type="region of interest" description="Disordered" evidence="2">
    <location>
        <begin position="532"/>
        <end position="570"/>
    </location>
</feature>
<feature type="compositionally biased region" description="Basic and acidic residues" evidence="2">
    <location>
        <begin position="425"/>
        <end position="436"/>
    </location>
</feature>
<feature type="compositionally biased region" description="Low complexity" evidence="2">
    <location>
        <begin position="475"/>
        <end position="489"/>
    </location>
</feature>
<feature type="compositionally biased region" description="Polar residues" evidence="2">
    <location>
        <begin position="532"/>
        <end position="545"/>
    </location>
</feature>
<feature type="binding site" description="in other chain" evidence="1">
    <location>
        <position position="10"/>
    </location>
    <ligand>
        <name>Ca(2+)</name>
        <dbReference type="ChEBI" id="CHEBI:29108"/>
        <note>ligand shared between two neighboring subunits</note>
    </ligand>
</feature>
<feature type="binding site" evidence="1">
    <location>
        <position position="293"/>
    </location>
    <ligand>
        <name>Ca(2+)</name>
        <dbReference type="ChEBI" id="CHEBI:29108"/>
        <note>ligand shared between two neighboring subunits</note>
    </ligand>
</feature>
<feature type="binding site" evidence="1">
    <location>
        <position position="296"/>
    </location>
    <ligand>
        <name>Ca(2+)</name>
        <dbReference type="ChEBI" id="CHEBI:29108"/>
        <note>ligand shared between two neighboring subunits</note>
    </ligand>
</feature>
<feature type="binding site" evidence="1">
    <location>
        <position position="301"/>
    </location>
    <ligand>
        <name>Ca(2+)</name>
        <dbReference type="ChEBI" id="CHEBI:29108"/>
        <note>ligand shared between two neighboring subunits</note>
    </ligand>
</feature>
<feature type="binding site" evidence="1">
    <location>
        <position position="304"/>
    </location>
    <ligand>
        <name>Ca(2+)</name>
        <dbReference type="ChEBI" id="CHEBI:29108"/>
        <note>ligand shared between two neighboring subunits</note>
    </ligand>
</feature>
<feature type="splice variant" id="VSP_046979" description="In isoform 5." evidence="8">
    <location>
        <begin position="1"/>
        <end position="162"/>
    </location>
</feature>
<feature type="splice variant" id="VSP_008981" description="In isoform 4 and isoform 6." evidence="7">
    <location>
        <begin position="1"/>
        <end position="106"/>
    </location>
</feature>
<feature type="splice variant" id="VSP_008982" description="In isoform 4." evidence="7">
    <original>GFMTTDERKLFNHLKSPH</original>
    <variation>ERTGMKPILPSSFEMQSF</variation>
    <location>
        <begin position="161"/>
        <end position="178"/>
    </location>
</feature>
<feature type="splice variant" id="VSP_008983" description="In isoform 4." evidence="7">
    <location>
        <begin position="179"/>
        <end position="668"/>
    </location>
</feature>
<feature type="splice variant" id="VSP_046980" description="In isoform 5." evidence="8">
    <location>
        <begin position="239"/>
        <end position="289"/>
    </location>
</feature>
<feature type="splice variant" id="VSP_008977" description="In isoform 1." evidence="5 6">
    <original>LSGSDFPDEEWLWDYEKHGHRHSMIRRVKRF</original>
    <variation>KQMPKNEWKMEDIKIPLPQPQFQCAKSDPGG</variation>
    <location>
        <begin position="368"/>
        <end position="398"/>
    </location>
</feature>
<feature type="splice variant" id="VSP_008978" description="In isoform 1." evidence="5 6">
    <location>
        <begin position="399"/>
        <end position="668"/>
    </location>
</feature>
<feature type="sequence variant" id="VAR_048409" description="In dbSNP:rs1025016.">
    <original>Y</original>
    <variation>H</variation>
    <location>
        <position position="43"/>
    </location>
</feature>
<feature type="sequence variant" id="VAR_048410" description="In dbSNP:rs17106884.">
    <original>E</original>
    <variation>G</variation>
    <location>
        <position position="622"/>
    </location>
</feature>